<sequence length="369" mass="41092">MAYSTVQRVALASGLVLALSLLLPKAFLSRGKRQEPPPTPEGKLGRFPPMMHHHQAPSDGQTPGARFQRSHLAEAFAKAKGSGGGAGGGGSGRGLMGQIIPIYGFGIFLYILYILFKLSKGKTTAEDGKCYTAMPGNTHRKITSFELAQLQEKLKETEAAMEKLINRVGPNGESRAQTVTSDQEKRLLHQLREITRVMKEGKFIDRFSPEKEAEEAPYMEDWEGYPEETYPIYDLSDCIKRRQETILVDYPDPKELSAEEIAERMGMIEEEESDHLGWESLPTDPRAQEDNSVTSCDPKPETCSCCFHEDEDPAVLAENAGFSADSYPEQEETTKEEWSQDFKDEGLGISTDKAYTGSMLRKRNPQGLE</sequence>
<reference key="1">
    <citation type="journal article" date="2003" name="J. Biol. Chem.">
        <title>Conservation within the RIC-3 gene family. Effectors of mammalian nicotinic acetylcholine receptor expression.</title>
        <authorList>
            <person name="Halevi S."/>
            <person name="Yassin L."/>
            <person name="Eshel M."/>
            <person name="Sala F."/>
            <person name="Sala S."/>
            <person name="Criado M."/>
            <person name="Treinin M."/>
        </authorList>
    </citation>
    <scope>NUCLEOTIDE SEQUENCE [MRNA] (ISOFORMS 1 AND 2)</scope>
    <scope>ALTERNATIVE SPLICING (ISOFORMS 1; 2; 3 AND 4)</scope>
    <scope>TISSUE SPECIFICITY</scope>
    <scope>FUNCTION</scope>
</reference>
<reference key="2">
    <citation type="journal article" date="2008" name="Biosci. Rep.">
        <title>Molecular cloning and characterization of a novel human variant of RIC-3, a putative chaperone of nicotinic acetylcholine receptors.</title>
        <authorList>
            <person name="Seredenina T."/>
            <person name="Ferraro T."/>
            <person name="Terstappen G.C."/>
            <person name="Caricasole A."/>
            <person name="Roncarati R."/>
        </authorList>
    </citation>
    <scope>NUCLEOTIDE SEQUENCE [MRNA] (ISOFORM 5)</scope>
    <scope>ALTERNATIVE SPLICING</scope>
    <scope>FUNCTION</scope>
    <scope>TISSUE SPECIFICITY</scope>
    <source>
        <tissue>Hippocampus</tissue>
    </source>
</reference>
<reference key="3">
    <citation type="journal article" date="2003" name="Genome Res.">
        <title>The secreted protein discovery initiative (SPDI), a large-scale effort to identify novel human secreted and transmembrane proteins: a bioinformatics assessment.</title>
        <authorList>
            <person name="Clark H.F."/>
            <person name="Gurney A.L."/>
            <person name="Abaya E."/>
            <person name="Baker K."/>
            <person name="Baldwin D.T."/>
            <person name="Brush J."/>
            <person name="Chen J."/>
            <person name="Chow B."/>
            <person name="Chui C."/>
            <person name="Crowley C."/>
            <person name="Currell B."/>
            <person name="Deuel B."/>
            <person name="Dowd P."/>
            <person name="Eaton D."/>
            <person name="Foster J.S."/>
            <person name="Grimaldi C."/>
            <person name="Gu Q."/>
            <person name="Hass P.E."/>
            <person name="Heldens S."/>
            <person name="Huang A."/>
            <person name="Kim H.S."/>
            <person name="Klimowski L."/>
            <person name="Jin Y."/>
            <person name="Johnson S."/>
            <person name="Lee J."/>
            <person name="Lewis L."/>
            <person name="Liao D."/>
            <person name="Mark M.R."/>
            <person name="Robbie E."/>
            <person name="Sanchez C."/>
            <person name="Schoenfeld J."/>
            <person name="Seshagiri S."/>
            <person name="Simmons L."/>
            <person name="Singh J."/>
            <person name="Smith V."/>
            <person name="Stinson J."/>
            <person name="Vagts A."/>
            <person name="Vandlen R.L."/>
            <person name="Watanabe C."/>
            <person name="Wieand D."/>
            <person name="Woods K."/>
            <person name="Xie M.-H."/>
            <person name="Yansura D.G."/>
            <person name="Yi S."/>
            <person name="Yu G."/>
            <person name="Yuan J."/>
            <person name="Zhang M."/>
            <person name="Zhang Z."/>
            <person name="Goddard A.D."/>
            <person name="Wood W.I."/>
            <person name="Godowski P.J."/>
            <person name="Gray A.M."/>
        </authorList>
    </citation>
    <scope>NUCLEOTIDE SEQUENCE [LARGE SCALE MRNA] (ISOFORM 2)</scope>
</reference>
<reference key="4">
    <citation type="journal article" date="2004" name="Nat. Genet.">
        <title>Complete sequencing and characterization of 21,243 full-length human cDNAs.</title>
        <authorList>
            <person name="Ota T."/>
            <person name="Suzuki Y."/>
            <person name="Nishikawa T."/>
            <person name="Otsuki T."/>
            <person name="Sugiyama T."/>
            <person name="Irie R."/>
            <person name="Wakamatsu A."/>
            <person name="Hayashi K."/>
            <person name="Sato H."/>
            <person name="Nagai K."/>
            <person name="Kimura K."/>
            <person name="Makita H."/>
            <person name="Sekine M."/>
            <person name="Obayashi M."/>
            <person name="Nishi T."/>
            <person name="Shibahara T."/>
            <person name="Tanaka T."/>
            <person name="Ishii S."/>
            <person name="Yamamoto J."/>
            <person name="Saito K."/>
            <person name="Kawai Y."/>
            <person name="Isono Y."/>
            <person name="Nakamura Y."/>
            <person name="Nagahari K."/>
            <person name="Murakami K."/>
            <person name="Yasuda T."/>
            <person name="Iwayanagi T."/>
            <person name="Wagatsuma M."/>
            <person name="Shiratori A."/>
            <person name="Sudo H."/>
            <person name="Hosoiri T."/>
            <person name="Kaku Y."/>
            <person name="Kodaira H."/>
            <person name="Kondo H."/>
            <person name="Sugawara M."/>
            <person name="Takahashi M."/>
            <person name="Kanda K."/>
            <person name="Yokoi T."/>
            <person name="Furuya T."/>
            <person name="Kikkawa E."/>
            <person name="Omura Y."/>
            <person name="Abe K."/>
            <person name="Kamihara K."/>
            <person name="Katsuta N."/>
            <person name="Sato K."/>
            <person name="Tanikawa M."/>
            <person name="Yamazaki M."/>
            <person name="Ninomiya K."/>
            <person name="Ishibashi T."/>
            <person name="Yamashita H."/>
            <person name="Murakawa K."/>
            <person name="Fujimori K."/>
            <person name="Tanai H."/>
            <person name="Kimata M."/>
            <person name="Watanabe M."/>
            <person name="Hiraoka S."/>
            <person name="Chiba Y."/>
            <person name="Ishida S."/>
            <person name="Ono Y."/>
            <person name="Takiguchi S."/>
            <person name="Watanabe S."/>
            <person name="Yosida M."/>
            <person name="Hotuta T."/>
            <person name="Kusano J."/>
            <person name="Kanehori K."/>
            <person name="Takahashi-Fujii A."/>
            <person name="Hara H."/>
            <person name="Tanase T.-O."/>
            <person name="Nomura Y."/>
            <person name="Togiya S."/>
            <person name="Komai F."/>
            <person name="Hara R."/>
            <person name="Takeuchi K."/>
            <person name="Arita M."/>
            <person name="Imose N."/>
            <person name="Musashino K."/>
            <person name="Yuuki H."/>
            <person name="Oshima A."/>
            <person name="Sasaki N."/>
            <person name="Aotsuka S."/>
            <person name="Yoshikawa Y."/>
            <person name="Matsunawa H."/>
            <person name="Ichihara T."/>
            <person name="Shiohata N."/>
            <person name="Sano S."/>
            <person name="Moriya S."/>
            <person name="Momiyama H."/>
            <person name="Satoh N."/>
            <person name="Takami S."/>
            <person name="Terashima Y."/>
            <person name="Suzuki O."/>
            <person name="Nakagawa S."/>
            <person name="Senoh A."/>
            <person name="Mizoguchi H."/>
            <person name="Goto Y."/>
            <person name="Shimizu F."/>
            <person name="Wakebe H."/>
            <person name="Hishigaki H."/>
            <person name="Watanabe T."/>
            <person name="Sugiyama A."/>
            <person name="Takemoto M."/>
            <person name="Kawakami B."/>
            <person name="Yamazaki M."/>
            <person name="Watanabe K."/>
            <person name="Kumagai A."/>
            <person name="Itakura S."/>
            <person name="Fukuzumi Y."/>
            <person name="Fujimori Y."/>
            <person name="Komiyama M."/>
            <person name="Tashiro H."/>
            <person name="Tanigami A."/>
            <person name="Fujiwara T."/>
            <person name="Ono T."/>
            <person name="Yamada K."/>
            <person name="Fujii Y."/>
            <person name="Ozaki K."/>
            <person name="Hirao M."/>
            <person name="Ohmori Y."/>
            <person name="Kawabata A."/>
            <person name="Hikiji T."/>
            <person name="Kobatake N."/>
            <person name="Inagaki H."/>
            <person name="Ikema Y."/>
            <person name="Okamoto S."/>
            <person name="Okitani R."/>
            <person name="Kawakami T."/>
            <person name="Noguchi S."/>
            <person name="Itoh T."/>
            <person name="Shigeta K."/>
            <person name="Senba T."/>
            <person name="Matsumura K."/>
            <person name="Nakajima Y."/>
            <person name="Mizuno T."/>
            <person name="Morinaga M."/>
            <person name="Sasaki M."/>
            <person name="Togashi T."/>
            <person name="Oyama M."/>
            <person name="Hata H."/>
            <person name="Watanabe M."/>
            <person name="Komatsu T."/>
            <person name="Mizushima-Sugano J."/>
            <person name="Satoh T."/>
            <person name="Shirai Y."/>
            <person name="Takahashi Y."/>
            <person name="Nakagawa K."/>
            <person name="Okumura K."/>
            <person name="Nagase T."/>
            <person name="Nomura N."/>
            <person name="Kikuchi H."/>
            <person name="Masuho Y."/>
            <person name="Yamashita R."/>
            <person name="Nakai K."/>
            <person name="Yada T."/>
            <person name="Nakamura Y."/>
            <person name="Ohara O."/>
            <person name="Isogai T."/>
            <person name="Sugano S."/>
        </authorList>
    </citation>
    <scope>NUCLEOTIDE SEQUENCE [LARGE SCALE MRNA] (ISOFORM 4)</scope>
    <source>
        <tissue>Brain</tissue>
        <tissue>Embryo</tissue>
    </source>
</reference>
<reference key="5">
    <citation type="journal article" date="2007" name="BMC Genomics">
        <title>The full-ORF clone resource of the German cDNA consortium.</title>
        <authorList>
            <person name="Bechtel S."/>
            <person name="Rosenfelder H."/>
            <person name="Duda A."/>
            <person name="Schmidt C.P."/>
            <person name="Ernst U."/>
            <person name="Wellenreuther R."/>
            <person name="Mehrle A."/>
            <person name="Schuster C."/>
            <person name="Bahr A."/>
            <person name="Bloecker H."/>
            <person name="Heubner D."/>
            <person name="Hoerlein A."/>
            <person name="Michel G."/>
            <person name="Wedler H."/>
            <person name="Koehrer K."/>
            <person name="Ottenwaelder B."/>
            <person name="Poustka A."/>
            <person name="Wiemann S."/>
            <person name="Schupp I."/>
        </authorList>
    </citation>
    <scope>NUCLEOTIDE SEQUENCE [LARGE SCALE MRNA] (ISOFORM 3)</scope>
    <source>
        <tissue>Spinal cord</tissue>
    </source>
</reference>
<reference key="6">
    <citation type="journal article" date="2006" name="Nature">
        <title>Human chromosome 11 DNA sequence and analysis including novel gene identification.</title>
        <authorList>
            <person name="Taylor T.D."/>
            <person name="Noguchi H."/>
            <person name="Totoki Y."/>
            <person name="Toyoda A."/>
            <person name="Kuroki Y."/>
            <person name="Dewar K."/>
            <person name="Lloyd C."/>
            <person name="Itoh T."/>
            <person name="Takeda T."/>
            <person name="Kim D.-W."/>
            <person name="She X."/>
            <person name="Barlow K.F."/>
            <person name="Bloom T."/>
            <person name="Bruford E."/>
            <person name="Chang J.L."/>
            <person name="Cuomo C.A."/>
            <person name="Eichler E."/>
            <person name="FitzGerald M.G."/>
            <person name="Jaffe D.B."/>
            <person name="LaButti K."/>
            <person name="Nicol R."/>
            <person name="Park H.-S."/>
            <person name="Seaman C."/>
            <person name="Sougnez C."/>
            <person name="Yang X."/>
            <person name="Zimmer A.R."/>
            <person name="Zody M.C."/>
            <person name="Birren B.W."/>
            <person name="Nusbaum C."/>
            <person name="Fujiyama A."/>
            <person name="Hattori M."/>
            <person name="Rogers J."/>
            <person name="Lander E.S."/>
            <person name="Sakaki Y."/>
        </authorList>
    </citation>
    <scope>NUCLEOTIDE SEQUENCE [LARGE SCALE GENOMIC DNA]</scope>
</reference>
<reference key="7">
    <citation type="submission" date="2005-09" db="EMBL/GenBank/DDBJ databases">
        <authorList>
            <person name="Mural R.J."/>
            <person name="Istrail S."/>
            <person name="Sutton G.G."/>
            <person name="Florea L."/>
            <person name="Halpern A.L."/>
            <person name="Mobarry C.M."/>
            <person name="Lippert R."/>
            <person name="Walenz B."/>
            <person name="Shatkay H."/>
            <person name="Dew I."/>
            <person name="Miller J.R."/>
            <person name="Flanigan M.J."/>
            <person name="Edwards N.J."/>
            <person name="Bolanos R."/>
            <person name="Fasulo D."/>
            <person name="Halldorsson B.V."/>
            <person name="Hannenhalli S."/>
            <person name="Turner R."/>
            <person name="Yooseph S."/>
            <person name="Lu F."/>
            <person name="Nusskern D.R."/>
            <person name="Shue B.C."/>
            <person name="Zheng X.H."/>
            <person name="Zhong F."/>
            <person name="Delcher A.L."/>
            <person name="Huson D.H."/>
            <person name="Kravitz S.A."/>
            <person name="Mouchard L."/>
            <person name="Reinert K."/>
            <person name="Remington K.A."/>
            <person name="Clark A.G."/>
            <person name="Waterman M.S."/>
            <person name="Eichler E.E."/>
            <person name="Adams M.D."/>
            <person name="Hunkapiller M.W."/>
            <person name="Myers E.W."/>
            <person name="Venter J.C."/>
        </authorList>
    </citation>
    <scope>NUCLEOTIDE SEQUENCE [LARGE SCALE GENOMIC DNA]</scope>
</reference>
<reference key="8">
    <citation type="journal article" date="2004" name="Genome Res.">
        <title>The status, quality, and expansion of the NIH full-length cDNA project: the Mammalian Gene Collection (MGC).</title>
        <authorList>
            <consortium name="The MGC Project Team"/>
        </authorList>
    </citation>
    <scope>NUCLEOTIDE SEQUENCE [LARGE SCALE MRNA] (ISOFORM 4)</scope>
    <scope>VARIANT HIS-57</scope>
    <source>
        <tissue>Brain</tissue>
    </source>
</reference>
<reference key="9">
    <citation type="journal article" date="2005" name="J. Biol. Chem.">
        <title>Ric-3 promotes functional expression of the nicotinic acetylcholine receptor alpha7 subunit in mammalian cells.</title>
        <authorList>
            <person name="Williams M.E."/>
            <person name="Burton B."/>
            <person name="Urrutia A."/>
            <person name="Shcherbatko A."/>
            <person name="Chavez-Noriega L.E."/>
            <person name="Cohen C.J."/>
            <person name="Aiyar J."/>
        </authorList>
    </citation>
    <scope>FUNCTION</scope>
    <scope>INTERACTION WITH CHRNA7</scope>
</reference>
<reference key="10">
    <citation type="journal article" date="2005" name="J. Biol. Chem.">
        <title>Cell surface expression of 5-hydroxytryptamine type 3 receptors is promoted by RIC-3.</title>
        <authorList>
            <person name="Cheng A."/>
            <person name="McDonald N.A."/>
            <person name="Connolly C.N."/>
        </authorList>
    </citation>
    <scope>FUNCTION</scope>
    <scope>INTERACTION WITH HTR3A</scope>
    <scope>SUBCELLULAR LOCATION</scope>
</reference>
<reference key="11">
    <citation type="journal article" date="2005" name="J. Biol. Chem.">
        <title>Dual role of the RIC-3 protein in trafficking of serotonin and nicotinic acetylcholine receptors.</title>
        <authorList>
            <person name="Castillo M."/>
            <person name="Mulet J."/>
            <person name="Gutierrez L.M."/>
            <person name="Ortiz J.A."/>
            <person name="Castelan F."/>
            <person name="Gerber S."/>
            <person name="Sala S."/>
            <person name="Sala F."/>
            <person name="Criado M."/>
        </authorList>
    </citation>
    <scope>FUNCTION</scope>
    <scope>SUBCELLULAR LOCATION</scope>
</reference>
<reference key="12">
    <citation type="journal article" date="2005" name="Mol. Pharmacol.">
        <title>RIC-3 enhances functional expression of multiple nicotinic acetylcholine receptor subtypes in mammalian cells.</title>
        <authorList>
            <person name="Lansdell S.J."/>
            <person name="Gee V.J."/>
            <person name="Harkness P.C."/>
            <person name="Doward A.I."/>
            <person name="Baker E.R."/>
            <person name="Gibb A.J."/>
            <person name="Millar N.S."/>
        </authorList>
    </citation>
    <scope>FUNCTION</scope>
    <scope>INTERACTION WITH CHRNA7; CHRNA3; CHRNA4; CHRNB2 AND CHRNB4</scope>
</reference>
<reference key="13">
    <citation type="journal article" date="2007" name="J. Biol. Chem.">
        <title>Differential subcellular localization of RIC-3 isoforms and their role in determining 5-HT3 receptor composition.</title>
        <authorList>
            <person name="Cheng A."/>
            <person name="Bollan K.A."/>
            <person name="Greenwood S.M."/>
            <person name="Irving A.J."/>
            <person name="Connolly C.N."/>
        </authorList>
    </citation>
    <scope>SUBCELLULAR LOCATION</scope>
    <scope>TOPOLOGY</scope>
    <scope>FUNCTION</scope>
</reference>
<reference key="14">
    <citation type="journal article" date="2007" name="Neuroscience">
        <title>Lack of RIC-3 congruence with beta2 subunit-containing nicotinic acetylcholine receptors in bipolar disorder.</title>
        <authorList>
            <person name="Severance E.G."/>
            <person name="Yolken R.H."/>
        </authorList>
    </citation>
    <scope>TISSUE SPECIFICITY</scope>
</reference>
<reference key="15">
    <citation type="journal article" date="2007" name="Proteomics">
        <title>Tryptic digestion of ubiquitin standards reveals an improved strategy for identifying ubiquitinated proteins by mass spectrometry.</title>
        <authorList>
            <person name="Denis N.J."/>
            <person name="Vasilescu J."/>
            <person name="Lambert J.-P."/>
            <person name="Smith J.C."/>
            <person name="Figeys D."/>
        </authorList>
    </citation>
    <scope>UBIQUITINATION [LARGE SCALE ANALYSIS] AT LYS-202</scope>
    <scope>IDENTIFICATION BY MASS SPECTROMETRY</scope>
    <source>
        <tissue>Mammary cancer</tissue>
    </source>
</reference>
<reference key="16">
    <citation type="journal article" date="2009" name="Science">
        <title>Lysine acetylation targets protein complexes and co-regulates major cellular functions.</title>
        <authorList>
            <person name="Choudhary C."/>
            <person name="Kumar C."/>
            <person name="Gnad F."/>
            <person name="Nielsen M.L."/>
            <person name="Rehman M."/>
            <person name="Walther T.C."/>
            <person name="Olsen J.V."/>
            <person name="Mann M."/>
        </authorList>
    </citation>
    <scope>ACETYLATION [LARGE SCALE ANALYSIS] AT LYS-202</scope>
    <scope>IDENTIFICATION BY MASS SPECTROMETRY [LARGE SCALE ANALYSIS]</scope>
</reference>
<reference key="17">
    <citation type="journal article" date="2020" name="Biomolecules">
        <title>Why Does Knocking Out NACHO, But Not RIC3, Completely Block Expression of alpha7 Nicotinic Receptors in Mouse Brain?</title>
        <authorList>
            <person name="Deshpande A."/>
            <person name="Vinayakamoorthy R.M."/>
            <person name="Garg B.K."/>
            <person name="Thummapudi J.P."/>
            <person name="Oza G."/>
            <person name="Adhikari K."/>
            <person name="Agarwal A."/>
            <person name="Dalvi P."/>
            <person name="Iyer S."/>
            <person name="Thulasi Raman S."/>
            <person name="Ramesh V."/>
            <person name="Rameshbabu A."/>
            <person name="Rezvaya A."/>
            <person name="Sukumaran S."/>
            <person name="Swaminathan S."/>
            <person name="Tilak B."/>
            <person name="Wang Z."/>
            <person name="Tran P.V."/>
            <person name="Loring R.H."/>
        </authorList>
    </citation>
    <scope>FUNCTION</scope>
</reference>
<reference key="18">
    <citation type="journal article" date="2006" name="Science">
        <title>The consensus coding sequences of human breast and colorectal cancers.</title>
        <authorList>
            <person name="Sjoeblom T."/>
            <person name="Jones S."/>
            <person name="Wood L.D."/>
            <person name="Parsons D.W."/>
            <person name="Lin J."/>
            <person name="Barber T.D."/>
            <person name="Mandelker D."/>
            <person name="Leary R.J."/>
            <person name="Ptak J."/>
            <person name="Silliman N."/>
            <person name="Szabo S."/>
            <person name="Buckhaults P."/>
            <person name="Farrell C."/>
            <person name="Meeh P."/>
            <person name="Markowitz S.D."/>
            <person name="Willis J."/>
            <person name="Dawson D."/>
            <person name="Willson J.K.V."/>
            <person name="Gazdar A.F."/>
            <person name="Hartigan J."/>
            <person name="Wu L."/>
            <person name="Liu C."/>
            <person name="Parmigiani G."/>
            <person name="Park B.H."/>
            <person name="Bachman K.E."/>
            <person name="Papadopoulos N."/>
            <person name="Vogelstein B."/>
            <person name="Kinzler K.W."/>
            <person name="Velculescu V.E."/>
        </authorList>
    </citation>
    <scope>VARIANT [LARGE SCALE ANALYSIS] VAL-346</scope>
</reference>
<dbReference type="EMBL" id="AY326435">
    <property type="protein sequence ID" value="AAP92162.1"/>
    <property type="molecule type" value="mRNA"/>
</dbReference>
<dbReference type="EMBL" id="AY326436">
    <property type="protein sequence ID" value="AAP92163.1"/>
    <property type="molecule type" value="mRNA"/>
</dbReference>
<dbReference type="EMBL" id="AM422214">
    <property type="protein sequence ID" value="CAM12309.1"/>
    <property type="molecule type" value="mRNA"/>
</dbReference>
<dbReference type="EMBL" id="AY358475">
    <property type="protein sequence ID" value="AAQ88839.1"/>
    <property type="molecule type" value="mRNA"/>
</dbReference>
<dbReference type="EMBL" id="AK021670">
    <property type="protein sequence ID" value="BAB13871.1"/>
    <property type="status" value="ALT_SEQ"/>
    <property type="molecule type" value="mRNA"/>
</dbReference>
<dbReference type="EMBL" id="AK315379">
    <property type="protein sequence ID" value="BAG37772.1"/>
    <property type="molecule type" value="mRNA"/>
</dbReference>
<dbReference type="EMBL" id="AL832601">
    <property type="protein sequence ID" value="CAD89943.1"/>
    <property type="molecule type" value="mRNA"/>
</dbReference>
<dbReference type="EMBL" id="AC091013">
    <property type="status" value="NOT_ANNOTATED_CDS"/>
    <property type="molecule type" value="Genomic_DNA"/>
</dbReference>
<dbReference type="EMBL" id="AC116456">
    <property type="status" value="NOT_ANNOTATED_CDS"/>
    <property type="molecule type" value="Genomic_DNA"/>
</dbReference>
<dbReference type="EMBL" id="AC129895">
    <property type="status" value="NOT_ANNOTATED_CDS"/>
    <property type="molecule type" value="Genomic_DNA"/>
</dbReference>
<dbReference type="EMBL" id="CH471064">
    <property type="protein sequence ID" value="EAW68628.1"/>
    <property type="molecule type" value="Genomic_DNA"/>
</dbReference>
<dbReference type="EMBL" id="CH471064">
    <property type="protein sequence ID" value="EAW68630.1"/>
    <property type="molecule type" value="Genomic_DNA"/>
</dbReference>
<dbReference type="EMBL" id="BC022455">
    <property type="protein sequence ID" value="AAH22455.1"/>
    <property type="molecule type" value="mRNA"/>
</dbReference>
<dbReference type="CCDS" id="CCDS44533.1">
    <molecule id="Q7Z5B4-3"/>
</dbReference>
<dbReference type="CCDS" id="CCDS55741.1">
    <molecule id="Q7Z5B4-6"/>
</dbReference>
<dbReference type="CCDS" id="CCDS55742.1">
    <molecule id="Q7Z5B4-1"/>
</dbReference>
<dbReference type="CCDS" id="CCDS7788.1">
    <molecule id="Q7Z5B4-5"/>
</dbReference>
<dbReference type="RefSeq" id="NP_001128581.1">
    <molecule id="Q7Z5B4-3"/>
    <property type="nucleotide sequence ID" value="NM_001135109.4"/>
</dbReference>
<dbReference type="RefSeq" id="NP_001193600.1">
    <molecule id="Q7Z5B4-1"/>
    <property type="nucleotide sequence ID" value="NM_001206671.4"/>
</dbReference>
<dbReference type="RefSeq" id="NP_001193601.1">
    <molecule id="Q7Z5B4-6"/>
    <property type="nucleotide sequence ID" value="NM_001206672.4"/>
</dbReference>
<dbReference type="RefSeq" id="NP_001333619.1">
    <property type="nucleotide sequence ID" value="NM_001346690.1"/>
</dbReference>
<dbReference type="RefSeq" id="NP_078833.3">
    <molecule id="Q7Z5B4-5"/>
    <property type="nucleotide sequence ID" value="NM_024557.5"/>
</dbReference>
<dbReference type="RefSeq" id="XP_006718381.1">
    <molecule id="Q7Z5B4-5"/>
    <property type="nucleotide sequence ID" value="XM_006718318.5"/>
</dbReference>
<dbReference type="SMR" id="Q7Z5B4"/>
<dbReference type="BioGRID" id="122743">
    <property type="interactions" value="71"/>
</dbReference>
<dbReference type="FunCoup" id="Q7Z5B4">
    <property type="interactions" value="106"/>
</dbReference>
<dbReference type="IntAct" id="Q7Z5B4">
    <property type="interactions" value="34"/>
</dbReference>
<dbReference type="MINT" id="Q7Z5B4"/>
<dbReference type="STRING" id="9606.ENSP00000308820"/>
<dbReference type="DrugBank" id="DB00277">
    <property type="generic name" value="Theophylline"/>
</dbReference>
<dbReference type="TCDB" id="8.A.71.1.1">
    <property type="family name" value="the ric3 protein (ric3) family"/>
</dbReference>
<dbReference type="GlyGen" id="Q7Z5B4">
    <property type="glycosylation" value="1 site"/>
</dbReference>
<dbReference type="iPTMnet" id="Q7Z5B4"/>
<dbReference type="PhosphoSitePlus" id="Q7Z5B4"/>
<dbReference type="BioMuta" id="RIC3"/>
<dbReference type="DMDM" id="74713638"/>
<dbReference type="MassIVE" id="Q7Z5B4"/>
<dbReference type="PaxDb" id="9606-ENSP00000308820"/>
<dbReference type="PeptideAtlas" id="Q7Z5B4"/>
<dbReference type="ProteomicsDB" id="69281">
    <molecule id="Q7Z5B4-1"/>
</dbReference>
<dbReference type="ProteomicsDB" id="69283">
    <molecule id="Q7Z5B4-3"/>
</dbReference>
<dbReference type="ProteomicsDB" id="69284">
    <molecule id="Q7Z5B4-5"/>
</dbReference>
<dbReference type="ProteomicsDB" id="69285">
    <molecule id="Q7Z5B4-6"/>
</dbReference>
<dbReference type="Antibodypedia" id="24077">
    <property type="antibodies" value="86 antibodies from 18 providers"/>
</dbReference>
<dbReference type="DNASU" id="79608"/>
<dbReference type="Ensembl" id="ENST00000309737.11">
    <molecule id="Q7Z5B4-1"/>
    <property type="protein sequence ID" value="ENSP00000308820.6"/>
    <property type="gene ID" value="ENSG00000166405.16"/>
</dbReference>
<dbReference type="Ensembl" id="ENST00000335425.7">
    <molecule id="Q7Z5B4-3"/>
    <property type="protein sequence ID" value="ENSP00000333988.7"/>
    <property type="gene ID" value="ENSG00000166405.16"/>
</dbReference>
<dbReference type="Ensembl" id="ENST00000343202.8">
    <molecule id="Q7Z5B4-5"/>
    <property type="protein sequence ID" value="ENSP00000344904.4"/>
    <property type="gene ID" value="ENSG00000166405.16"/>
</dbReference>
<dbReference type="Ensembl" id="ENST00000419822.2">
    <molecule id="Q7Z5B4-2"/>
    <property type="protein sequence ID" value="ENSP00000404415.2"/>
    <property type="gene ID" value="ENSG00000166405.16"/>
</dbReference>
<dbReference type="Ensembl" id="ENST00000425599.6">
    <molecule id="Q7Z5B4-6"/>
    <property type="protein sequence ID" value="ENSP00000395320.2"/>
    <property type="gene ID" value="ENSG00000166405.16"/>
</dbReference>
<dbReference type="GeneID" id="79608"/>
<dbReference type="KEGG" id="hsa:79608"/>
<dbReference type="MANE-Select" id="ENST00000309737.11">
    <property type="protein sequence ID" value="ENSP00000308820.6"/>
    <property type="RefSeq nucleotide sequence ID" value="NM_001206671.4"/>
    <property type="RefSeq protein sequence ID" value="NP_001193600.1"/>
</dbReference>
<dbReference type="UCSC" id="uc001mgc.3">
    <molecule id="Q7Z5B4-1"/>
    <property type="organism name" value="human"/>
</dbReference>
<dbReference type="AGR" id="HGNC:30338"/>
<dbReference type="CTD" id="79608"/>
<dbReference type="DisGeNET" id="79608"/>
<dbReference type="GeneCards" id="RIC3"/>
<dbReference type="HGNC" id="HGNC:30338">
    <property type="gene designation" value="RIC3"/>
</dbReference>
<dbReference type="HPA" id="ENSG00000166405">
    <property type="expression patterns" value="Low tissue specificity"/>
</dbReference>
<dbReference type="MalaCards" id="RIC3"/>
<dbReference type="MIM" id="610509">
    <property type="type" value="gene"/>
</dbReference>
<dbReference type="neXtProt" id="NX_Q7Z5B4"/>
<dbReference type="OpenTargets" id="ENSG00000166405"/>
<dbReference type="PharmGKB" id="PA142671066"/>
<dbReference type="VEuPathDB" id="HostDB:ENSG00000166405"/>
<dbReference type="eggNOG" id="ENOG502RZG3">
    <property type="taxonomic scope" value="Eukaryota"/>
</dbReference>
<dbReference type="GeneTree" id="ENSGT00440000034107"/>
<dbReference type="HOGENOM" id="CLU_1447194_0_0_1"/>
<dbReference type="InParanoid" id="Q7Z5B4"/>
<dbReference type="OMA" id="HQMPSDG"/>
<dbReference type="OrthoDB" id="9938788at2759"/>
<dbReference type="PAN-GO" id="Q7Z5B4">
    <property type="GO annotations" value="5 GO annotations based on evolutionary models"/>
</dbReference>
<dbReference type="PhylomeDB" id="Q7Z5B4"/>
<dbReference type="TreeFam" id="TF333291"/>
<dbReference type="PathwayCommons" id="Q7Z5B4"/>
<dbReference type="SignaLink" id="Q7Z5B4"/>
<dbReference type="BioGRID-ORCS" id="79608">
    <property type="hits" value="4 hits in 1146 CRISPR screens"/>
</dbReference>
<dbReference type="ChiTaRS" id="RIC3">
    <property type="organism name" value="human"/>
</dbReference>
<dbReference type="GeneWiki" id="RIC3"/>
<dbReference type="GenomeRNAi" id="79608"/>
<dbReference type="Pharos" id="Q7Z5B4">
    <property type="development level" value="Tbio"/>
</dbReference>
<dbReference type="PRO" id="PR:Q7Z5B4"/>
<dbReference type="Proteomes" id="UP000005640">
    <property type="component" value="Chromosome 11"/>
</dbReference>
<dbReference type="RNAct" id="Q7Z5B4">
    <property type="molecule type" value="protein"/>
</dbReference>
<dbReference type="Bgee" id="ENSG00000166405">
    <property type="expression patterns" value="Expressed in adenohypophysis and 103 other cell types or tissues"/>
</dbReference>
<dbReference type="ExpressionAtlas" id="Q7Z5B4">
    <property type="expression patterns" value="baseline and differential"/>
</dbReference>
<dbReference type="GO" id="GO:0005789">
    <property type="term" value="C:endoplasmic reticulum membrane"/>
    <property type="evidence" value="ECO:0007669"/>
    <property type="project" value="UniProtKB-SubCell"/>
</dbReference>
<dbReference type="GO" id="GO:0000139">
    <property type="term" value="C:Golgi membrane"/>
    <property type="evidence" value="ECO:0007669"/>
    <property type="project" value="UniProtKB-SubCell"/>
</dbReference>
<dbReference type="GO" id="GO:0043231">
    <property type="term" value="C:intracellular membrane-bounded organelle"/>
    <property type="evidence" value="ECO:0000318"/>
    <property type="project" value="GO_Central"/>
</dbReference>
<dbReference type="GO" id="GO:0043005">
    <property type="term" value="C:neuron projection"/>
    <property type="evidence" value="ECO:0000318"/>
    <property type="project" value="GO_Central"/>
</dbReference>
<dbReference type="GO" id="GO:0043025">
    <property type="term" value="C:neuronal cell body"/>
    <property type="evidence" value="ECO:0000318"/>
    <property type="project" value="GO_Central"/>
</dbReference>
<dbReference type="GO" id="GO:0045202">
    <property type="term" value="C:synapse"/>
    <property type="evidence" value="ECO:0007669"/>
    <property type="project" value="GOC"/>
</dbReference>
<dbReference type="GO" id="GO:0033130">
    <property type="term" value="F:acetylcholine receptor binding"/>
    <property type="evidence" value="ECO:0007669"/>
    <property type="project" value="Ensembl"/>
</dbReference>
<dbReference type="GO" id="GO:0044183">
    <property type="term" value="F:protein folding chaperone"/>
    <property type="evidence" value="ECO:0007669"/>
    <property type="project" value="Ensembl"/>
</dbReference>
<dbReference type="GO" id="GO:0007204">
    <property type="term" value="P:positive regulation of cytosolic calcium ion concentration"/>
    <property type="evidence" value="ECO:0007669"/>
    <property type="project" value="Ensembl"/>
</dbReference>
<dbReference type="GO" id="GO:2000010">
    <property type="term" value="P:positive regulation of protein localization to cell surface"/>
    <property type="evidence" value="ECO:0000314"/>
    <property type="project" value="UniProtKB"/>
</dbReference>
<dbReference type="GO" id="GO:0034394">
    <property type="term" value="P:protein localization to cell surface"/>
    <property type="evidence" value="ECO:0000318"/>
    <property type="project" value="GO_Central"/>
</dbReference>
<dbReference type="GO" id="GO:0065003">
    <property type="term" value="P:protein-containing complex assembly"/>
    <property type="evidence" value="ECO:0007669"/>
    <property type="project" value="Ensembl"/>
</dbReference>
<dbReference type="GO" id="GO:0007271">
    <property type="term" value="P:synaptic transmission, cholinergic"/>
    <property type="evidence" value="ECO:0000318"/>
    <property type="project" value="GO_Central"/>
</dbReference>
<dbReference type="InterPro" id="IPR026160">
    <property type="entry name" value="Ric3"/>
</dbReference>
<dbReference type="InterPro" id="IPR032763">
    <property type="entry name" value="RIC3_N"/>
</dbReference>
<dbReference type="PANTHER" id="PTHR21723:SF3">
    <property type="entry name" value="PROTEIN RIC-3"/>
    <property type="match status" value="1"/>
</dbReference>
<dbReference type="PANTHER" id="PTHR21723">
    <property type="entry name" value="RESISTANCE TO INHIBITORS OF CHOLINESTERASE PROTEIN 3 RIC3"/>
    <property type="match status" value="1"/>
</dbReference>
<dbReference type="Pfam" id="PF15361">
    <property type="entry name" value="RIC3"/>
    <property type="match status" value="1"/>
</dbReference>
<name>RIC3_HUMAN</name>
<feature type="signal peptide" evidence="1">
    <location>
        <begin position="1"/>
        <end position="28"/>
    </location>
</feature>
<feature type="chain" id="PRO_0000302731" description="Protein RIC-3">
    <location>
        <begin position="29"/>
        <end position="369"/>
    </location>
</feature>
<feature type="topological domain" description="Lumenal" evidence="2">
    <location>
        <begin position="29"/>
        <end position="95"/>
    </location>
</feature>
<feature type="transmembrane region" description="Helical" evidence="2">
    <location>
        <begin position="96"/>
        <end position="116"/>
    </location>
</feature>
<feature type="topological domain" description="Cytoplasmic" evidence="2">
    <location>
        <begin position="117"/>
        <end position="369"/>
    </location>
</feature>
<feature type="region of interest" description="Disordered" evidence="3">
    <location>
        <begin position="30"/>
        <end position="67"/>
    </location>
</feature>
<feature type="region of interest" description="Disordered" evidence="3">
    <location>
        <begin position="272"/>
        <end position="295"/>
    </location>
</feature>
<feature type="region of interest" description="Disordered" evidence="3">
    <location>
        <begin position="316"/>
        <end position="369"/>
    </location>
</feature>
<feature type="coiled-coil region" evidence="1">
    <location>
        <begin position="140"/>
        <end position="169"/>
    </location>
</feature>
<feature type="compositionally biased region" description="Basic and acidic residues" evidence="3">
    <location>
        <begin position="332"/>
        <end position="346"/>
    </location>
</feature>
<feature type="compositionally biased region" description="Basic residues" evidence="3">
    <location>
        <begin position="360"/>
        <end position="369"/>
    </location>
</feature>
<feature type="modified residue" description="N6-acetyllysine; alternate" evidence="23">
    <location>
        <position position="202"/>
    </location>
</feature>
<feature type="cross-link" description="Glycyl lysine isopeptide (Lys-Gly) (interchain with G-Cter in ubiquitin); alternate" evidence="11">
    <location>
        <position position="202"/>
    </location>
</feature>
<feature type="splice variant" id="VSP_027939" description="In isoform 3." evidence="20">
    <location>
        <begin position="41"/>
        <end position="222"/>
    </location>
</feature>
<feature type="splice variant" id="VSP_027940" description="In isoform 2." evidence="16 17">
    <original>LSKGKTTAEDG</original>
    <variation>VSRIILIILHQ</variation>
    <location>
        <begin position="118"/>
        <end position="128"/>
    </location>
</feature>
<feature type="splice variant" id="VSP_027941" description="In isoform 2." evidence="16 17">
    <location>
        <begin position="129"/>
        <end position="369"/>
    </location>
</feature>
<feature type="splice variant" id="VSP_043786" description="In isoform 5." evidence="21">
    <original>TSFELAQLQEKLKETEAAMEKLINRVGPNGESRAQTVTSDQEKRLLHQLREITRVMKEGKFIDRFSPEKEAEEAPYMEDWEG</original>
    <variation>S</variation>
    <location>
        <begin position="143"/>
        <end position="224"/>
    </location>
</feature>
<feature type="splice variant" id="VSP_027943" description="In isoform 4." evidence="18 19">
    <location>
        <position position="174"/>
    </location>
</feature>
<feature type="sequence variant" id="VAR_034943" description="In dbSNP:rs17855498." evidence="5">
    <original>P</original>
    <variation>H</variation>
    <location>
        <position position="57"/>
    </location>
</feature>
<feature type="sequence variant" id="VAR_062208" description="In dbSNP:rs55990541.">
    <original>C</original>
    <variation>Y</variation>
    <location>
        <position position="130"/>
    </location>
</feature>
<feature type="sequence variant" id="VAR_036391" description="In a colorectal cancer sample; somatic mutation; dbSNP:rs1945152321." evidence="10">
    <original>G</original>
    <variation>V</variation>
    <location>
        <position position="346"/>
    </location>
</feature>
<feature type="sequence conflict" description="In Ref. 1; AAP92163." evidence="22" ref="1">
    <location>
        <position position="23"/>
    </location>
</feature>
<feature type="sequence conflict" description="In Ref. 8; AAH22455." evidence="22" ref="8">
    <original>I</original>
    <variation>F</variation>
    <location>
        <position position="165"/>
    </location>
</feature>
<feature type="sequence conflict" description="In Ref. 1; AAP92163." evidence="22" ref="1">
    <original>I</original>
    <variation>T</variation>
    <location sequence="Q7Z5B4-2">
        <position position="124"/>
    </location>
</feature>
<proteinExistence type="evidence at protein level"/>
<keyword id="KW-0007">Acetylation</keyword>
<keyword id="KW-0025">Alternative splicing</keyword>
<keyword id="KW-0143">Chaperone</keyword>
<keyword id="KW-0175">Coiled coil</keyword>
<keyword id="KW-0256">Endoplasmic reticulum</keyword>
<keyword id="KW-0333">Golgi apparatus</keyword>
<keyword id="KW-1017">Isopeptide bond</keyword>
<keyword id="KW-0472">Membrane</keyword>
<keyword id="KW-1267">Proteomics identification</keyword>
<keyword id="KW-1185">Reference proteome</keyword>
<keyword id="KW-0732">Signal</keyword>
<keyword id="KW-0812">Transmembrane</keyword>
<keyword id="KW-1133">Transmembrane helix</keyword>
<keyword id="KW-0832">Ubl conjugation</keyword>
<comment type="function">
    <text evidence="4 6 7 8 9 12 14 15">Molecular chaperone which facilitates proper subunit assembly and surface trafficking of alpha-7 (CHRNA7) and alpha-8 (CHRNA8) nicotinic acetylcholine receptors (PubMed:12821669, PubMed:15504725, PubMed:16120769, PubMed:18691158, PubMed:32204458). May also promote functional expression of homomeric serotoninergic 5-HT3 receptors, and of heteromeric acetylcholine receptors alpha-3/beta-2, alpha-3/beta-4, alpha-4/beta-2 and alpha-4/beta-4.</text>
</comment>
<comment type="subunit">
    <text evidence="6 7 9">Monomer and homodimer. Interacts with CHRNA7, CHRNA3, CHRNA4, CHRNB2, CHRNB4 and HTR3A.</text>
</comment>
<comment type="interaction">
    <interactant intactId="EBI-12375429">
        <id>Q7Z5B4-5</id>
    </interactant>
    <interactant intactId="EBI-78035">
        <id>Q07817</id>
        <label>BCL2L1</label>
    </interactant>
    <organismsDiffer>false</organismsDiffer>
    <experiments>3</experiments>
</comment>
<comment type="interaction">
    <interactant intactId="EBI-12375429">
        <id>Q7Z5B4-5</id>
    </interactant>
    <interactant intactId="EBI-6165897">
        <id>Q9NWW5</id>
        <label>CLN6</label>
    </interactant>
    <organismsDiffer>false</organismsDiffer>
    <experiments>3</experiments>
</comment>
<comment type="interaction">
    <interactant intactId="EBI-12375429">
        <id>Q7Z5B4-5</id>
    </interactant>
    <interactant intactId="EBI-11337888">
        <id>Q7L5A8</id>
        <label>FA2H</label>
    </interactant>
    <organismsDiffer>false</organismsDiffer>
    <experiments>3</experiments>
</comment>
<comment type="interaction">
    <interactant intactId="EBI-12375429">
        <id>Q7Z5B4-5</id>
    </interactant>
    <interactant intactId="EBI-743099">
        <id>Q969F0</id>
        <label>FATE1</label>
    </interactant>
    <organismsDiffer>false</organismsDiffer>
    <experiments>3</experiments>
</comment>
<comment type="interaction">
    <interactant intactId="EBI-12375429">
        <id>Q7Z5B4-5</id>
    </interactant>
    <interactant intactId="EBI-4401517">
        <id>O14653</id>
        <label>GOSR2</label>
    </interactant>
    <organismsDiffer>false</organismsDiffer>
    <experiments>3</experiments>
</comment>
<comment type="interaction">
    <interactant intactId="EBI-12375429">
        <id>Q7Z5B4-5</id>
    </interactant>
    <interactant intactId="EBI-10317425">
        <id>Q9NZG7</id>
        <label>NINJ2</label>
    </interactant>
    <organismsDiffer>false</organismsDiffer>
    <experiments>3</experiments>
</comment>
<comment type="interaction">
    <interactant intactId="EBI-12375429">
        <id>Q7Z5B4-5</id>
    </interactant>
    <interactant intactId="EBI-10173935">
        <id>A5D903</id>
        <label>PRB1</label>
    </interactant>
    <organismsDiffer>false</organismsDiffer>
    <experiments>3</experiments>
</comment>
<comment type="interaction">
    <interactant intactId="EBI-12375429">
        <id>Q7Z5B4-5</id>
    </interactant>
    <interactant intactId="EBI-2691717">
        <id>Q86Y82</id>
        <label>STX12</label>
    </interactant>
    <organismsDiffer>false</organismsDiffer>
    <experiments>3</experiments>
</comment>
<comment type="interaction">
    <interactant intactId="EBI-12375429">
        <id>Q7Z5B4-5</id>
    </interactant>
    <interactant intactId="EBI-3221827">
        <id>O15400</id>
        <label>STX7</label>
    </interactant>
    <organismsDiffer>false</organismsDiffer>
    <experiments>3</experiments>
</comment>
<comment type="interaction">
    <interactant intactId="EBI-12375429">
        <id>Q7Z5B4-5</id>
    </interactant>
    <interactant intactId="EBI-2820569">
        <id>Q969X1</id>
        <label>TMBIM1</label>
    </interactant>
    <organismsDiffer>false</organismsDiffer>
    <experiments>3</experiments>
</comment>
<comment type="interaction">
    <interactant intactId="EBI-12375429">
        <id>Q7Z5B4-5</id>
    </interactant>
    <interactant intactId="EBI-11423693">
        <id>Q9UIK5</id>
        <label>TMEFF2</label>
    </interactant>
    <organismsDiffer>false</organismsDiffer>
    <experiments>3</experiments>
</comment>
<comment type="interaction">
    <interactant intactId="EBI-12375429">
        <id>Q7Z5B4-5</id>
    </interactant>
    <interactant intactId="EBI-723946">
        <id>P17152</id>
        <label>TMEM11</label>
    </interactant>
    <organismsDiffer>false</organismsDiffer>
    <experiments>3</experiments>
</comment>
<comment type="interaction">
    <interactant intactId="EBI-12375429">
        <id>Q7Z5B4-5</id>
    </interactant>
    <interactant intactId="EBI-12015604">
        <id>Q8N2M4</id>
        <label>TMEM86A</label>
    </interactant>
    <organismsDiffer>false</organismsDiffer>
    <experiments>3</experiments>
</comment>
<comment type="interaction">
    <interactant intactId="EBI-12375429">
        <id>Q7Z5B4-5</id>
    </interactant>
    <interactant intactId="EBI-765817">
        <id>Q9Y228</id>
        <label>TRAF3IP3</label>
    </interactant>
    <organismsDiffer>false</organismsDiffer>
    <experiments>3</experiments>
</comment>
<comment type="interaction">
    <interactant intactId="EBI-12375429">
        <id>Q7Z5B4-5</id>
    </interactant>
    <interactant intactId="EBI-2799703">
        <id>O95070</id>
        <label>YIF1A</label>
    </interactant>
    <organismsDiffer>false</organismsDiffer>
    <experiments>3</experiments>
</comment>
<comment type="subcellular location">
    <molecule>Isoform 1</molecule>
    <subcellularLocation>
        <location>Endoplasmic reticulum membrane</location>
        <topology>Single-pass membrane protein</topology>
    </subcellularLocation>
</comment>
<comment type="subcellular location">
    <molecule>Isoform 2</molecule>
    <subcellularLocation>
        <location>Endoplasmic reticulum membrane</location>
        <topology>Single-pass membrane protein</topology>
    </subcellularLocation>
    <subcellularLocation>
        <location>Golgi apparatus membrane</location>
        <topology>Single-pass membrane protein</topology>
    </subcellularLocation>
</comment>
<comment type="alternative products">
    <event type="alternative splicing"/>
    <isoform>
        <id>Q7Z5B4-1</id>
        <name>1</name>
        <name>a</name>
        <sequence type="displayed"/>
    </isoform>
    <isoform>
        <id>Q7Z5B4-2</id>
        <name>2</name>
        <name>d</name>
        <sequence type="described" ref="VSP_027940 VSP_027941"/>
    </isoform>
    <isoform>
        <id>Q7Z5B4-3</id>
        <name>3</name>
        <name>c</name>
        <sequence type="described" ref="VSP_027939"/>
    </isoform>
    <isoform>
        <id>Q7Z5B4-5</id>
        <name>4</name>
        <name>b</name>
        <sequence type="described" ref="VSP_027943"/>
    </isoform>
    <isoform>
        <id>Q7Z5B4-6</id>
        <name>5</name>
        <name>e</name>
        <sequence type="described" ref="VSP_043786"/>
    </isoform>
</comment>
<comment type="tissue specificity">
    <text evidence="4 13 14">Broadly expressed, with high levels in muscle, brain, heart, pancreas and testis. In the central nervous system, highest levels are detected in the cerebellum and pituitary gland. Over-expressed in brains from patients with bipolar disease or schizophrenia. Isoform 5 is predominantly expressed in the brain.</text>
</comment>
<comment type="domain">
    <text evidence="1">The coiled-coil domain mediates transient homodimerization with other acetylcholine receptor-bound RIC3 molecules, promoting stepwise ACHR homomeric assembly at the membrane.</text>
</comment>
<comment type="similarity">
    <text evidence="22">Belongs to the ric-3 family.</text>
</comment>
<comment type="sequence caution" evidence="22">
    <conflict type="miscellaneous discrepancy">
        <sequence resource="EMBL-CDS" id="BAB13871"/>
    </conflict>
    <text>Probable cloning artifact.</text>
</comment>
<accession>Q7Z5B4</accession>
<accession>B0B1U0</accession>
<accession>B2RD25</accession>
<accession>D3DQU5</accession>
<accession>Q6UX78</accession>
<accession>Q7Z5B3</accession>
<accession>Q86T94</accession>
<accession>Q8TBJ9</accession>
<accession>Q9HAH8</accession>
<evidence type="ECO:0000250" key="1"/>
<evidence type="ECO:0000255" key="2"/>
<evidence type="ECO:0000256" key="3">
    <source>
        <dbReference type="SAM" id="MobiDB-lite"/>
    </source>
</evidence>
<evidence type="ECO:0000269" key="4">
    <source>
    </source>
</evidence>
<evidence type="ECO:0000269" key="5">
    <source>
    </source>
</evidence>
<evidence type="ECO:0000269" key="6">
    <source>
    </source>
</evidence>
<evidence type="ECO:0000269" key="7">
    <source>
    </source>
</evidence>
<evidence type="ECO:0000269" key="8">
    <source>
    </source>
</evidence>
<evidence type="ECO:0000269" key="9">
    <source>
    </source>
</evidence>
<evidence type="ECO:0000269" key="10">
    <source>
    </source>
</evidence>
<evidence type="ECO:0000269" key="11">
    <source>
    </source>
</evidence>
<evidence type="ECO:0000269" key="12">
    <source>
    </source>
</evidence>
<evidence type="ECO:0000269" key="13">
    <source>
    </source>
</evidence>
<evidence type="ECO:0000269" key="14">
    <source>
    </source>
</evidence>
<evidence type="ECO:0000269" key="15">
    <source>
    </source>
</evidence>
<evidence type="ECO:0000303" key="16">
    <source>
    </source>
</evidence>
<evidence type="ECO:0000303" key="17">
    <source>
    </source>
</evidence>
<evidence type="ECO:0000303" key="18">
    <source>
    </source>
</evidence>
<evidence type="ECO:0000303" key="19">
    <source>
    </source>
</evidence>
<evidence type="ECO:0000303" key="20">
    <source>
    </source>
</evidence>
<evidence type="ECO:0000303" key="21">
    <source>
    </source>
</evidence>
<evidence type="ECO:0000305" key="22"/>
<evidence type="ECO:0007744" key="23">
    <source>
    </source>
</evidence>
<organism>
    <name type="scientific">Homo sapiens</name>
    <name type="common">Human</name>
    <dbReference type="NCBI Taxonomy" id="9606"/>
    <lineage>
        <taxon>Eukaryota</taxon>
        <taxon>Metazoa</taxon>
        <taxon>Chordata</taxon>
        <taxon>Craniata</taxon>
        <taxon>Vertebrata</taxon>
        <taxon>Euteleostomi</taxon>
        <taxon>Mammalia</taxon>
        <taxon>Eutheria</taxon>
        <taxon>Euarchontoglires</taxon>
        <taxon>Primates</taxon>
        <taxon>Haplorrhini</taxon>
        <taxon>Catarrhini</taxon>
        <taxon>Hominidae</taxon>
        <taxon>Homo</taxon>
    </lineage>
</organism>
<gene>
    <name type="primary">RIC3</name>
    <name type="ORF">UNQ720/PRO1385</name>
</gene>
<protein>
    <recommendedName>
        <fullName>Protein RIC-3</fullName>
    </recommendedName>
    <alternativeName>
        <fullName>Resistant to inhibitor of cholinesterase 3</fullName>
    </alternativeName>
</protein>